<gene>
    <name evidence="2" type="primary">psaC</name>
    <name type="ORF">PA170</name>
</gene>
<accession>P0C359</accession>
<accession>P10794</accession>
<accession>P69414</accession>
<accession>Q6QXX3</accession>
<accession>Q6QY36</accession>
<dbReference type="EC" id="1.97.1.12" evidence="2"/>
<dbReference type="EMBL" id="AY522331">
    <property type="protein sequence ID" value="AAS46221.1"/>
    <property type="molecule type" value="Genomic_DNA"/>
</dbReference>
<dbReference type="RefSeq" id="NP_039445.1">
    <property type="nucleotide sequence ID" value="NC_001320.1"/>
</dbReference>
<dbReference type="RefSeq" id="YP_009305363.1">
    <property type="nucleotide sequence ID" value="NC_031333.1"/>
</dbReference>
<dbReference type="SMR" id="P0C359"/>
<dbReference type="GeneID" id="29141439"/>
<dbReference type="GeneID" id="3131408"/>
<dbReference type="KEGG" id="osa:3131408"/>
<dbReference type="ExpressionAtlas" id="P0C359">
    <property type="expression patterns" value="baseline and differential"/>
</dbReference>
<dbReference type="GO" id="GO:0009535">
    <property type="term" value="C:chloroplast thylakoid membrane"/>
    <property type="evidence" value="ECO:0007669"/>
    <property type="project" value="UniProtKB-SubCell"/>
</dbReference>
<dbReference type="GO" id="GO:0009522">
    <property type="term" value="C:photosystem I"/>
    <property type="evidence" value="ECO:0007669"/>
    <property type="project" value="UniProtKB-KW"/>
</dbReference>
<dbReference type="GO" id="GO:0009536">
    <property type="term" value="C:plastid"/>
    <property type="evidence" value="ECO:0000305"/>
    <property type="project" value="Gramene"/>
</dbReference>
<dbReference type="GO" id="GO:0051539">
    <property type="term" value="F:4 iron, 4 sulfur cluster binding"/>
    <property type="evidence" value="ECO:0007669"/>
    <property type="project" value="UniProtKB-KW"/>
</dbReference>
<dbReference type="GO" id="GO:0009055">
    <property type="term" value="F:electron transfer activity"/>
    <property type="evidence" value="ECO:0007669"/>
    <property type="project" value="UniProtKB-UniRule"/>
</dbReference>
<dbReference type="GO" id="GO:0046872">
    <property type="term" value="F:metal ion binding"/>
    <property type="evidence" value="ECO:0007669"/>
    <property type="project" value="UniProtKB-KW"/>
</dbReference>
<dbReference type="GO" id="GO:0016491">
    <property type="term" value="F:oxidoreductase activity"/>
    <property type="evidence" value="ECO:0007669"/>
    <property type="project" value="UniProtKB-KW"/>
</dbReference>
<dbReference type="GO" id="GO:0009773">
    <property type="term" value="P:photosynthetic electron transport in photosystem I"/>
    <property type="evidence" value="ECO:0007669"/>
    <property type="project" value="InterPro"/>
</dbReference>
<dbReference type="FunFam" id="3.30.70.20:FF:000001">
    <property type="entry name" value="Photosystem I iron-sulfur center"/>
    <property type="match status" value="1"/>
</dbReference>
<dbReference type="Gene3D" id="3.30.70.20">
    <property type="match status" value="1"/>
</dbReference>
<dbReference type="HAMAP" id="MF_01303">
    <property type="entry name" value="PSI_PsaC"/>
    <property type="match status" value="1"/>
</dbReference>
<dbReference type="InterPro" id="IPR017896">
    <property type="entry name" value="4Fe4S_Fe-S-bd"/>
</dbReference>
<dbReference type="InterPro" id="IPR017900">
    <property type="entry name" value="4Fe4S_Fe_S_CS"/>
</dbReference>
<dbReference type="InterPro" id="IPR050157">
    <property type="entry name" value="PSI_iron-sulfur_center"/>
</dbReference>
<dbReference type="InterPro" id="IPR017491">
    <property type="entry name" value="PSI_PsaC"/>
</dbReference>
<dbReference type="NCBIfam" id="TIGR03048">
    <property type="entry name" value="PS_I_psaC"/>
    <property type="match status" value="1"/>
</dbReference>
<dbReference type="PANTHER" id="PTHR24960:SF79">
    <property type="entry name" value="PHOTOSYSTEM I IRON-SULFUR CENTER"/>
    <property type="match status" value="1"/>
</dbReference>
<dbReference type="PANTHER" id="PTHR24960">
    <property type="entry name" value="PHOTOSYSTEM I IRON-SULFUR CENTER-RELATED"/>
    <property type="match status" value="1"/>
</dbReference>
<dbReference type="Pfam" id="PF12838">
    <property type="entry name" value="Fer4_7"/>
    <property type="match status" value="1"/>
</dbReference>
<dbReference type="SUPFAM" id="SSF54862">
    <property type="entry name" value="4Fe-4S ferredoxins"/>
    <property type="match status" value="1"/>
</dbReference>
<dbReference type="PROSITE" id="PS00198">
    <property type="entry name" value="4FE4S_FER_1"/>
    <property type="match status" value="2"/>
</dbReference>
<dbReference type="PROSITE" id="PS51379">
    <property type="entry name" value="4FE4S_FER_2"/>
    <property type="match status" value="2"/>
</dbReference>
<organism>
    <name type="scientific">Oryza sativa</name>
    <name type="common">Rice</name>
    <dbReference type="NCBI Taxonomy" id="4530"/>
    <lineage>
        <taxon>Eukaryota</taxon>
        <taxon>Viridiplantae</taxon>
        <taxon>Streptophyta</taxon>
        <taxon>Embryophyta</taxon>
        <taxon>Tracheophyta</taxon>
        <taxon>Spermatophyta</taxon>
        <taxon>Magnoliopsida</taxon>
        <taxon>Liliopsida</taxon>
        <taxon>Poales</taxon>
        <taxon>Poaceae</taxon>
        <taxon>BOP clade</taxon>
        <taxon>Oryzoideae</taxon>
        <taxon>Oryzeae</taxon>
        <taxon>Oryzinae</taxon>
        <taxon>Oryza</taxon>
    </lineage>
</organism>
<evidence type="ECO:0000250" key="1"/>
<evidence type="ECO:0000255" key="2">
    <source>
        <dbReference type="HAMAP-Rule" id="MF_01303"/>
    </source>
</evidence>
<sequence>MSHSVKIYDTCIGCTQCVRACPTDVLEMIPWDGCKAKQIASAPRTEDCVGCKRCESACPTDFLSVRVYLGPETTRSMALSY</sequence>
<keyword id="KW-0004">4Fe-4S</keyword>
<keyword id="KW-0150">Chloroplast</keyword>
<keyword id="KW-0249">Electron transport</keyword>
<keyword id="KW-0408">Iron</keyword>
<keyword id="KW-0411">Iron-sulfur</keyword>
<keyword id="KW-0472">Membrane</keyword>
<keyword id="KW-0479">Metal-binding</keyword>
<keyword id="KW-0560">Oxidoreductase</keyword>
<keyword id="KW-0602">Photosynthesis</keyword>
<keyword id="KW-0603">Photosystem I</keyword>
<keyword id="KW-0934">Plastid</keyword>
<keyword id="KW-0677">Repeat</keyword>
<keyword id="KW-0793">Thylakoid</keyword>
<keyword id="KW-0813">Transport</keyword>
<comment type="function">
    <text evidence="2">Apoprotein for the two 4Fe-4S centers FA and FB of photosystem I (PSI); essential for photochemical activity. FB is the terminal electron acceptor of PSI, donating electrons to ferredoxin. The C-terminus interacts with PsaA/B/D and helps assemble the protein into the PSI complex. Required for binding of PsaD and PsaE to PSI. PSI is a plastocyanin-ferredoxin oxidoreductase, converting photonic excitation into a charge separation, which transfers an electron from the donor P700 chlorophyll pair to the spectroscopically characterized acceptors A0, A1, FX, FA and FB in turn.</text>
</comment>
<comment type="catalytic activity">
    <reaction evidence="2">
        <text>reduced [plastocyanin] + hnu + oxidized [2Fe-2S]-[ferredoxin] = oxidized [plastocyanin] + reduced [2Fe-2S]-[ferredoxin]</text>
        <dbReference type="Rhea" id="RHEA:30407"/>
        <dbReference type="Rhea" id="RHEA-COMP:10000"/>
        <dbReference type="Rhea" id="RHEA-COMP:10001"/>
        <dbReference type="Rhea" id="RHEA-COMP:10039"/>
        <dbReference type="Rhea" id="RHEA-COMP:10040"/>
        <dbReference type="ChEBI" id="CHEBI:29036"/>
        <dbReference type="ChEBI" id="CHEBI:30212"/>
        <dbReference type="ChEBI" id="CHEBI:33737"/>
        <dbReference type="ChEBI" id="CHEBI:33738"/>
        <dbReference type="ChEBI" id="CHEBI:49552"/>
        <dbReference type="EC" id="1.97.1.12"/>
    </reaction>
</comment>
<comment type="cofactor">
    <cofactor evidence="2">
        <name>[4Fe-4S] cluster</name>
        <dbReference type="ChEBI" id="CHEBI:49883"/>
    </cofactor>
    <text evidence="2">Binds 2 [4Fe-4S] clusters. Cluster 2 is most probably the spectroscopically characterized electron acceptor FA and cluster 1 is most probably FB.</text>
</comment>
<comment type="subunit">
    <text evidence="2">The eukaryotic PSI reaction center is composed of at least 11 subunits.</text>
</comment>
<comment type="subcellular location">
    <subcellularLocation>
        <location evidence="2">Plastid</location>
        <location evidence="2">Chloroplast thylakoid membrane</location>
        <topology evidence="2">Peripheral membrane protein</topology>
        <orientation evidence="2">Stromal side</orientation>
    </subcellularLocation>
</comment>
<name>PSAC_ORYSA</name>
<reference key="1">
    <citation type="journal article" date="2004" name="Plant Physiol.">
        <title>A comparison of rice chloroplast genomes.</title>
        <authorList>
            <person name="Tang J."/>
            <person name="Xia H."/>
            <person name="Cao M."/>
            <person name="Zhang X."/>
            <person name="Zeng W."/>
            <person name="Hu S."/>
            <person name="Tong W."/>
            <person name="Wang J."/>
            <person name="Wang J."/>
            <person name="Yu J."/>
            <person name="Yang H."/>
            <person name="Zhu L."/>
        </authorList>
    </citation>
    <scope>NUCLEOTIDE SEQUENCE [LARGE SCALE GENOMIC DNA]</scope>
    <source>
        <strain>cv. PA64s</strain>
    </source>
</reference>
<geneLocation type="chloroplast"/>
<protein>
    <recommendedName>
        <fullName evidence="2">Photosystem I iron-sulfur center</fullName>
        <ecNumber evidence="2">1.97.1.12</ecNumber>
    </recommendedName>
    <alternativeName>
        <fullName evidence="2">9 kDa polypeptide</fullName>
    </alternativeName>
    <alternativeName>
        <fullName evidence="2">PSI-C</fullName>
    </alternativeName>
    <alternativeName>
        <fullName evidence="2">Photosystem I subunit VII</fullName>
    </alternativeName>
    <alternativeName>
        <fullName evidence="2">PsaC</fullName>
    </alternativeName>
</protein>
<feature type="initiator methionine" description="Removed" evidence="1">
    <location>
        <position position="1"/>
    </location>
</feature>
<feature type="chain" id="PRO_0000061995" description="Photosystem I iron-sulfur center">
    <location>
        <begin position="2"/>
        <end position="81"/>
    </location>
</feature>
<feature type="domain" description="4Fe-4S ferredoxin-type 1" evidence="2">
    <location>
        <begin position="2"/>
        <end position="31"/>
    </location>
</feature>
<feature type="domain" description="4Fe-4S ferredoxin-type 2" evidence="2">
    <location>
        <begin position="39"/>
        <end position="68"/>
    </location>
</feature>
<feature type="binding site" evidence="2">
    <location>
        <position position="11"/>
    </location>
    <ligand>
        <name>[4Fe-4S] cluster</name>
        <dbReference type="ChEBI" id="CHEBI:49883"/>
        <label>1</label>
    </ligand>
</feature>
<feature type="binding site" evidence="2">
    <location>
        <position position="14"/>
    </location>
    <ligand>
        <name>[4Fe-4S] cluster</name>
        <dbReference type="ChEBI" id="CHEBI:49883"/>
        <label>1</label>
    </ligand>
</feature>
<feature type="binding site" evidence="2">
    <location>
        <position position="17"/>
    </location>
    <ligand>
        <name>[4Fe-4S] cluster</name>
        <dbReference type="ChEBI" id="CHEBI:49883"/>
        <label>1</label>
    </ligand>
</feature>
<feature type="binding site" evidence="2">
    <location>
        <position position="21"/>
    </location>
    <ligand>
        <name>[4Fe-4S] cluster</name>
        <dbReference type="ChEBI" id="CHEBI:49883"/>
        <label>2</label>
    </ligand>
</feature>
<feature type="binding site" evidence="2">
    <location>
        <position position="48"/>
    </location>
    <ligand>
        <name>[4Fe-4S] cluster</name>
        <dbReference type="ChEBI" id="CHEBI:49883"/>
        <label>2</label>
    </ligand>
</feature>
<feature type="binding site" evidence="2">
    <location>
        <position position="51"/>
    </location>
    <ligand>
        <name>[4Fe-4S] cluster</name>
        <dbReference type="ChEBI" id="CHEBI:49883"/>
        <label>2</label>
    </ligand>
</feature>
<feature type="binding site" evidence="2">
    <location>
        <position position="54"/>
    </location>
    <ligand>
        <name>[4Fe-4S] cluster</name>
        <dbReference type="ChEBI" id="CHEBI:49883"/>
        <label>2</label>
    </ligand>
</feature>
<feature type="binding site" evidence="2">
    <location>
        <position position="58"/>
    </location>
    <ligand>
        <name>[4Fe-4S] cluster</name>
        <dbReference type="ChEBI" id="CHEBI:49883"/>
        <label>1</label>
    </ligand>
</feature>
<proteinExistence type="inferred from homology"/>